<sequence length="601" mass="70000">MSTFVISNSMHVGISFSFLHKLPQTPPPQVVCCSGGLRLRPSCSLQLQPPPTTRRSGNYEPSAWDFNYLQSLNNYHHKEERYLRRQADLIEKVKMILKEEKMEALQQLELIDDLRNLGLSYCFDDQINHILTTIYNQHSCFHYHEAATSEEANLYFTALGFRLLREHGFKVSQEVFDRFKNEKGTDFRPDLVDDTQGLLQLYEASFLLREGEDTLEFARQFATKFLQKKVEEKMIEEENLLSWTLHSLELPLHWRIQRLEAKWFLDAYASRPDMNPIIFELAKLEFNIAQALQQEELKDLSRWWNDTGIAEKLPFARDRIVESHYWAIGTLEPYQYRYQRSLIAKIIALTTVVDDVYDVYGTLDELQLFTDAIRRWDIESINQLPSYMQLCYLAIYNFVSELAYDIFRDKGFNSLPYLHKSWLDLVEAYFQEAKWYHSGYTPSLEQYLNIAQISVASPAILSQIYFTMAGSIDKPVIESMYKYRHILNLSGILLRLPDDLGTASDELGRGDLAKAMQCYMKERNVSEEEARDHVRFLNREVSKQMNPARAADDCPFTDDFVVAAANLGRVADFMYVEGDGLGLQYPAIHQHMAELLFHPYA</sequence>
<proteinExistence type="evidence at protein level"/>
<keyword id="KW-0150">Chloroplast</keyword>
<keyword id="KW-0456">Lyase</keyword>
<keyword id="KW-0460">Magnesium</keyword>
<keyword id="KW-0479">Metal-binding</keyword>
<keyword id="KW-0934">Plastid</keyword>
<keyword id="KW-0809">Transit peptide</keyword>
<feature type="transit peptide" description="Chloroplast" evidence="2">
    <location>
        <begin position="1"/>
        <end position="32"/>
    </location>
</feature>
<feature type="chain" id="PRO_0000399255" description="Terpinolene synthase, chloroplastic">
    <location>
        <begin position="33"/>
        <end position="601"/>
    </location>
</feature>
<feature type="short sequence motif" description="DDXXD motif">
    <location>
        <begin position="354"/>
        <end position="358"/>
    </location>
</feature>
<feature type="binding site" evidence="1">
    <location>
        <position position="354"/>
    </location>
    <ligand>
        <name>Mg(2+)</name>
        <dbReference type="ChEBI" id="CHEBI:18420"/>
        <label>1</label>
    </ligand>
</feature>
<feature type="binding site" evidence="1">
    <location>
        <position position="354"/>
    </location>
    <ligand>
        <name>Mg(2+)</name>
        <dbReference type="ChEBI" id="CHEBI:18420"/>
        <label>2</label>
    </ligand>
</feature>
<feature type="binding site" evidence="1">
    <location>
        <position position="358"/>
    </location>
    <ligand>
        <name>Mg(2+)</name>
        <dbReference type="ChEBI" id="CHEBI:18420"/>
        <label>1</label>
    </ligand>
</feature>
<feature type="binding site" evidence="1">
    <location>
        <position position="358"/>
    </location>
    <ligand>
        <name>Mg(2+)</name>
        <dbReference type="ChEBI" id="CHEBI:18420"/>
        <label>2</label>
    </ligand>
</feature>
<feature type="binding site" evidence="1">
    <location>
        <position position="498"/>
    </location>
    <ligand>
        <name>Mg(2+)</name>
        <dbReference type="ChEBI" id="CHEBI:18420"/>
        <label>3</label>
    </ligand>
</feature>
<feature type="binding site" evidence="1">
    <location>
        <position position="502"/>
    </location>
    <ligand>
        <name>Mg(2+)</name>
        <dbReference type="ChEBI" id="CHEBI:18420"/>
        <label>3</label>
    </ligand>
</feature>
<feature type="binding site" evidence="1">
    <location>
        <position position="506"/>
    </location>
    <ligand>
        <name>Mg(2+)</name>
        <dbReference type="ChEBI" id="CHEBI:18420"/>
        <label>3</label>
    </ligand>
</feature>
<accession>Q5SBP0</accession>
<gene>
    <name type="primary">TES</name>
</gene>
<organism>
    <name type="scientific">Ocimum basilicum</name>
    <name type="common">Sweet basil</name>
    <dbReference type="NCBI Taxonomy" id="39350"/>
    <lineage>
        <taxon>Eukaryota</taxon>
        <taxon>Viridiplantae</taxon>
        <taxon>Streptophyta</taxon>
        <taxon>Embryophyta</taxon>
        <taxon>Tracheophyta</taxon>
        <taxon>Spermatophyta</taxon>
        <taxon>Magnoliopsida</taxon>
        <taxon>eudicotyledons</taxon>
        <taxon>Gunneridae</taxon>
        <taxon>Pentapetalae</taxon>
        <taxon>asterids</taxon>
        <taxon>lamiids</taxon>
        <taxon>Lamiales</taxon>
        <taxon>Lamiaceae</taxon>
        <taxon>Nepetoideae</taxon>
        <taxon>Ocimeae</taxon>
        <taxon>Ociminae</taxon>
        <taxon>Ocimum</taxon>
    </lineage>
</organism>
<name>TPSD_OCIBA</name>
<reference key="1">
    <citation type="journal article" date="2004" name="Plant Physiol.">
        <title>The biochemical and molecular basis for the divergent patterns in the biosynthesis of terpenes and phenylpropenes in the peltate glands of three cultivars of basil.</title>
        <authorList>
            <person name="Iijima Y."/>
            <person name="Davidovich-Rikanati R."/>
            <person name="Fridman E."/>
            <person name="Gang D.R."/>
            <person name="Bar E."/>
            <person name="Lewinsohn E."/>
            <person name="Pichersky E."/>
        </authorList>
    </citation>
    <scope>NUCLEOTIDE SEQUENCE [MRNA]</scope>
    <scope>FUNCTION</scope>
    <scope>CATALYTIC ACTIVITY</scope>
</reference>
<protein>
    <recommendedName>
        <fullName>Terpinolene synthase, chloroplastic</fullName>
        <ecNumber>4.2.3.113</ecNumber>
    </recommendedName>
</protein>
<dbReference type="EC" id="4.2.3.113"/>
<dbReference type="EMBL" id="AY693650">
    <property type="protein sequence ID" value="AAV63792.1"/>
    <property type="molecule type" value="mRNA"/>
</dbReference>
<dbReference type="SMR" id="Q5SBP0"/>
<dbReference type="UniPathway" id="UPA00213"/>
<dbReference type="GO" id="GO:0009507">
    <property type="term" value="C:chloroplast"/>
    <property type="evidence" value="ECO:0007669"/>
    <property type="project" value="UniProtKB-SubCell"/>
</dbReference>
<dbReference type="GO" id="GO:0000287">
    <property type="term" value="F:magnesium ion binding"/>
    <property type="evidence" value="ECO:0007669"/>
    <property type="project" value="InterPro"/>
</dbReference>
<dbReference type="GO" id="GO:0050550">
    <property type="term" value="F:pinene synthase activity"/>
    <property type="evidence" value="ECO:0007669"/>
    <property type="project" value="UniProtKB-ARBA"/>
</dbReference>
<dbReference type="GO" id="GO:0046248">
    <property type="term" value="P:alpha-pinene biosynthetic process"/>
    <property type="evidence" value="ECO:0007669"/>
    <property type="project" value="UniProtKB-ARBA"/>
</dbReference>
<dbReference type="GO" id="GO:0016102">
    <property type="term" value="P:diterpenoid biosynthetic process"/>
    <property type="evidence" value="ECO:0007669"/>
    <property type="project" value="InterPro"/>
</dbReference>
<dbReference type="GO" id="GO:0010597">
    <property type="term" value="P:green leaf volatile biosynthetic process"/>
    <property type="evidence" value="ECO:0007669"/>
    <property type="project" value="UniProtKB-ARBA"/>
</dbReference>
<dbReference type="GO" id="GO:0016099">
    <property type="term" value="P:monoterpenoid biosynthetic process"/>
    <property type="evidence" value="ECO:0007669"/>
    <property type="project" value="UniProtKB-ARBA"/>
</dbReference>
<dbReference type="CDD" id="cd00684">
    <property type="entry name" value="Terpene_cyclase_plant_C1"/>
    <property type="match status" value="1"/>
</dbReference>
<dbReference type="FunFam" id="1.10.600.10:FF:000007">
    <property type="entry name" value="Isoprene synthase, chloroplastic"/>
    <property type="match status" value="1"/>
</dbReference>
<dbReference type="FunFam" id="1.50.10.130:FF:000001">
    <property type="entry name" value="Isoprene synthase, chloroplastic"/>
    <property type="match status" value="1"/>
</dbReference>
<dbReference type="Gene3D" id="1.10.600.10">
    <property type="entry name" value="Farnesyl Diphosphate Synthase"/>
    <property type="match status" value="1"/>
</dbReference>
<dbReference type="Gene3D" id="1.50.10.130">
    <property type="entry name" value="Terpene synthase, N-terminal domain"/>
    <property type="match status" value="1"/>
</dbReference>
<dbReference type="InterPro" id="IPR008949">
    <property type="entry name" value="Isoprenoid_synthase_dom_sf"/>
</dbReference>
<dbReference type="InterPro" id="IPR044814">
    <property type="entry name" value="Terpene_cyclase_plant_C1"/>
</dbReference>
<dbReference type="InterPro" id="IPR001906">
    <property type="entry name" value="Terpene_synth_N"/>
</dbReference>
<dbReference type="InterPro" id="IPR036965">
    <property type="entry name" value="Terpene_synth_N_sf"/>
</dbReference>
<dbReference type="InterPro" id="IPR050148">
    <property type="entry name" value="Terpene_synthase-like"/>
</dbReference>
<dbReference type="InterPro" id="IPR005630">
    <property type="entry name" value="Terpene_synthase_metal-bd"/>
</dbReference>
<dbReference type="InterPro" id="IPR008930">
    <property type="entry name" value="Terpenoid_cyclase/PrenylTrfase"/>
</dbReference>
<dbReference type="PANTHER" id="PTHR31225">
    <property type="entry name" value="OS04G0344100 PROTEIN-RELATED"/>
    <property type="match status" value="1"/>
</dbReference>
<dbReference type="PANTHER" id="PTHR31225:SF9">
    <property type="entry name" value="TERPENE SYNTHASE 10"/>
    <property type="match status" value="1"/>
</dbReference>
<dbReference type="Pfam" id="PF01397">
    <property type="entry name" value="Terpene_synth"/>
    <property type="match status" value="1"/>
</dbReference>
<dbReference type="Pfam" id="PF03936">
    <property type="entry name" value="Terpene_synth_C"/>
    <property type="match status" value="1"/>
</dbReference>
<dbReference type="SFLD" id="SFLDS00005">
    <property type="entry name" value="Isoprenoid_Synthase_Type_I"/>
    <property type="match status" value="1"/>
</dbReference>
<dbReference type="SFLD" id="SFLDG01604">
    <property type="entry name" value="Terpene_Cyclase_Like_1_C_Termi"/>
    <property type="match status" value="1"/>
</dbReference>
<dbReference type="SUPFAM" id="SSF48239">
    <property type="entry name" value="Terpenoid cyclases/Protein prenyltransferases"/>
    <property type="match status" value="1"/>
</dbReference>
<dbReference type="SUPFAM" id="SSF48576">
    <property type="entry name" value="Terpenoid synthases"/>
    <property type="match status" value="1"/>
</dbReference>
<evidence type="ECO:0000250" key="1"/>
<evidence type="ECO:0000255" key="2"/>
<evidence type="ECO:0000269" key="3">
    <source>
    </source>
</evidence>
<evidence type="ECO:0000305" key="4"/>
<comment type="function">
    <text evidence="3">Monoterpene synthase that catalyzes the formation of terpinolene and other monoterpenes from geranyl diphosphate.</text>
</comment>
<comment type="catalytic activity">
    <reaction evidence="3">
        <text>(2E)-geranyl diphosphate = terpinolene + diphosphate</text>
        <dbReference type="Rhea" id="RHEA:25500"/>
        <dbReference type="ChEBI" id="CHEBI:9457"/>
        <dbReference type="ChEBI" id="CHEBI:33019"/>
        <dbReference type="ChEBI" id="CHEBI:58057"/>
        <dbReference type="EC" id="4.2.3.113"/>
    </reaction>
</comment>
<comment type="cofactor">
    <cofactor evidence="1">
        <name>Mg(2+)</name>
        <dbReference type="ChEBI" id="CHEBI:18420"/>
    </cofactor>
    <cofactor evidence="1">
        <name>Mn(2+)</name>
        <dbReference type="ChEBI" id="CHEBI:29035"/>
    </cofactor>
    <text evidence="1">Binds 3 Mg(2+) or Mn(2+) ions per subunit.</text>
</comment>
<comment type="pathway">
    <text>Secondary metabolite biosynthesis; terpenoid biosynthesis.</text>
</comment>
<comment type="subcellular location">
    <subcellularLocation>
        <location evidence="1">Plastid</location>
        <location evidence="1">Chloroplast</location>
    </subcellularLocation>
</comment>
<comment type="domain">
    <text>The Asp-Asp-Xaa-Xaa-Asp/Glu (DDXXD/E) motif is important for the catalytic activity, presumably through binding to Mg(2+).</text>
</comment>
<comment type="similarity">
    <text evidence="4">Belongs to the terpene synthase family. Tpsd subfamily.</text>
</comment>